<proteinExistence type="inferred from homology"/>
<gene>
    <name evidence="1" type="primary">aroB</name>
    <name type="ordered locus">AM1_5373</name>
</gene>
<feature type="chain" id="PRO_1000202904" description="3-dehydroquinate synthase">
    <location>
        <begin position="1"/>
        <end position="372"/>
    </location>
</feature>
<feature type="binding site" evidence="1">
    <location>
        <begin position="113"/>
        <end position="117"/>
    </location>
    <ligand>
        <name>NAD(+)</name>
        <dbReference type="ChEBI" id="CHEBI:57540"/>
    </ligand>
</feature>
<feature type="binding site" evidence="1">
    <location>
        <begin position="137"/>
        <end position="138"/>
    </location>
    <ligand>
        <name>NAD(+)</name>
        <dbReference type="ChEBI" id="CHEBI:57540"/>
    </ligand>
</feature>
<feature type="binding site" evidence="1">
    <location>
        <position position="150"/>
    </location>
    <ligand>
        <name>NAD(+)</name>
        <dbReference type="ChEBI" id="CHEBI:57540"/>
    </ligand>
</feature>
<feature type="binding site" evidence="1">
    <location>
        <position position="159"/>
    </location>
    <ligand>
        <name>NAD(+)</name>
        <dbReference type="ChEBI" id="CHEBI:57540"/>
    </ligand>
</feature>
<feature type="binding site" evidence="1">
    <location>
        <begin position="177"/>
        <end position="180"/>
    </location>
    <ligand>
        <name>NAD(+)</name>
        <dbReference type="ChEBI" id="CHEBI:57540"/>
    </ligand>
</feature>
<feature type="binding site" evidence="1">
    <location>
        <position position="192"/>
    </location>
    <ligand>
        <name>Zn(2+)</name>
        <dbReference type="ChEBI" id="CHEBI:29105"/>
    </ligand>
</feature>
<feature type="binding site" evidence="1">
    <location>
        <position position="257"/>
    </location>
    <ligand>
        <name>Zn(2+)</name>
        <dbReference type="ChEBI" id="CHEBI:29105"/>
    </ligand>
</feature>
<feature type="binding site" evidence="1">
    <location>
        <position position="274"/>
    </location>
    <ligand>
        <name>Zn(2+)</name>
        <dbReference type="ChEBI" id="CHEBI:29105"/>
    </ligand>
</feature>
<comment type="function">
    <text evidence="1">Catalyzes the conversion of 3-deoxy-D-arabino-heptulosonate 7-phosphate (DAHP) to dehydroquinate (DHQ).</text>
</comment>
<comment type="catalytic activity">
    <reaction evidence="1">
        <text>7-phospho-2-dehydro-3-deoxy-D-arabino-heptonate = 3-dehydroquinate + phosphate</text>
        <dbReference type="Rhea" id="RHEA:21968"/>
        <dbReference type="ChEBI" id="CHEBI:32364"/>
        <dbReference type="ChEBI" id="CHEBI:43474"/>
        <dbReference type="ChEBI" id="CHEBI:58394"/>
        <dbReference type="EC" id="4.2.3.4"/>
    </reaction>
</comment>
<comment type="cofactor">
    <cofactor evidence="1">
        <name>Co(2+)</name>
        <dbReference type="ChEBI" id="CHEBI:48828"/>
    </cofactor>
    <cofactor evidence="1">
        <name>Zn(2+)</name>
        <dbReference type="ChEBI" id="CHEBI:29105"/>
    </cofactor>
    <text evidence="1">Binds 1 divalent metal cation per subunit. Can use either Co(2+) or Zn(2+).</text>
</comment>
<comment type="cofactor">
    <cofactor evidence="1">
        <name>NAD(+)</name>
        <dbReference type="ChEBI" id="CHEBI:57540"/>
    </cofactor>
</comment>
<comment type="pathway">
    <text evidence="1">Metabolic intermediate biosynthesis; chorismate biosynthesis; chorismate from D-erythrose 4-phosphate and phosphoenolpyruvate: step 2/7.</text>
</comment>
<comment type="subcellular location">
    <subcellularLocation>
        <location evidence="1">Cytoplasm</location>
    </subcellularLocation>
</comment>
<comment type="similarity">
    <text evidence="1">Belongs to the sugar phosphate cyclases superfamily. Dehydroquinate synthase family.</text>
</comment>
<keyword id="KW-0028">Amino-acid biosynthesis</keyword>
<keyword id="KW-0057">Aromatic amino acid biosynthesis</keyword>
<keyword id="KW-0170">Cobalt</keyword>
<keyword id="KW-0963">Cytoplasm</keyword>
<keyword id="KW-0456">Lyase</keyword>
<keyword id="KW-0479">Metal-binding</keyword>
<keyword id="KW-0520">NAD</keyword>
<keyword id="KW-0547">Nucleotide-binding</keyword>
<keyword id="KW-1185">Reference proteome</keyword>
<keyword id="KW-0862">Zinc</keyword>
<sequence>MQQTFIPVPLPQQPYQIAIASGGLTQLGSWLQDRSLQSVKLGQKVLVVSNPQIWKHYGEIVQDSLAQAGFQVEHFLLPAGERYKTPRSIQKIYDYALDLKLERSSTLVALGGGVIGDMTGFAAATWLRGINFVQVPTSLLAMVDASIGGKTGVNHPKGKNLIGAFYQPRLVLIDPDTLKTLASREFRAGMAEVIKYGVIWDLELFEVLEGCDRTNQYRYMPPHILTEILTRSAQAKADVVTQDEKEAGLRAILNYGHTIGHAIESLTGYRLFNHGEAVALGMVAAADIAVQLDWWSVEDAQRQHQLIQKTGLPTELPADFAIEAVADVLLTDKKVKDGKVRFILPTQLGKIDITDQVPGQVIVSALKGMIGQ</sequence>
<organism>
    <name type="scientific">Acaryochloris marina (strain MBIC 11017)</name>
    <dbReference type="NCBI Taxonomy" id="329726"/>
    <lineage>
        <taxon>Bacteria</taxon>
        <taxon>Bacillati</taxon>
        <taxon>Cyanobacteriota</taxon>
        <taxon>Cyanophyceae</taxon>
        <taxon>Acaryochloridales</taxon>
        <taxon>Acaryochloridaceae</taxon>
        <taxon>Acaryochloris</taxon>
    </lineage>
</organism>
<name>AROB_ACAM1</name>
<reference key="1">
    <citation type="journal article" date="2008" name="Proc. Natl. Acad. Sci. U.S.A.">
        <title>Niche adaptation and genome expansion in the chlorophyll d-producing cyanobacterium Acaryochloris marina.</title>
        <authorList>
            <person name="Swingley W.D."/>
            <person name="Chen M."/>
            <person name="Cheung P.C."/>
            <person name="Conrad A.L."/>
            <person name="Dejesa L.C."/>
            <person name="Hao J."/>
            <person name="Honchak B.M."/>
            <person name="Karbach L.E."/>
            <person name="Kurdoglu A."/>
            <person name="Lahiri S."/>
            <person name="Mastrian S.D."/>
            <person name="Miyashita H."/>
            <person name="Page L."/>
            <person name="Ramakrishna P."/>
            <person name="Satoh S."/>
            <person name="Sattley W.M."/>
            <person name="Shimada Y."/>
            <person name="Taylor H.L."/>
            <person name="Tomo T."/>
            <person name="Tsuchiya T."/>
            <person name="Wang Z.T."/>
            <person name="Raymond J."/>
            <person name="Mimuro M."/>
            <person name="Blankenship R.E."/>
            <person name="Touchman J.W."/>
        </authorList>
    </citation>
    <scope>NUCLEOTIDE SEQUENCE [LARGE SCALE GENOMIC DNA]</scope>
    <source>
        <strain>MBIC 11017</strain>
    </source>
</reference>
<protein>
    <recommendedName>
        <fullName evidence="1">3-dehydroquinate synthase</fullName>
        <shortName evidence="1">DHQS</shortName>
        <ecNumber evidence="1">4.2.3.4</ecNumber>
    </recommendedName>
</protein>
<accession>B0CBS9</accession>
<dbReference type="EC" id="4.2.3.4" evidence="1"/>
<dbReference type="EMBL" id="CP000828">
    <property type="protein sequence ID" value="ABW30329.1"/>
    <property type="molecule type" value="Genomic_DNA"/>
</dbReference>
<dbReference type="RefSeq" id="WP_012165574.1">
    <property type="nucleotide sequence ID" value="NC_009925.1"/>
</dbReference>
<dbReference type="SMR" id="B0CBS9"/>
<dbReference type="STRING" id="329726.AM1_5373"/>
<dbReference type="KEGG" id="amr:AM1_5373"/>
<dbReference type="eggNOG" id="COG0337">
    <property type="taxonomic scope" value="Bacteria"/>
</dbReference>
<dbReference type="HOGENOM" id="CLU_001201_0_2_3"/>
<dbReference type="OrthoDB" id="9806583at2"/>
<dbReference type="UniPathway" id="UPA00053">
    <property type="reaction ID" value="UER00085"/>
</dbReference>
<dbReference type="Proteomes" id="UP000000268">
    <property type="component" value="Chromosome"/>
</dbReference>
<dbReference type="GO" id="GO:0005737">
    <property type="term" value="C:cytoplasm"/>
    <property type="evidence" value="ECO:0007669"/>
    <property type="project" value="UniProtKB-SubCell"/>
</dbReference>
<dbReference type="GO" id="GO:0003856">
    <property type="term" value="F:3-dehydroquinate synthase activity"/>
    <property type="evidence" value="ECO:0007669"/>
    <property type="project" value="UniProtKB-UniRule"/>
</dbReference>
<dbReference type="GO" id="GO:0046872">
    <property type="term" value="F:metal ion binding"/>
    <property type="evidence" value="ECO:0007669"/>
    <property type="project" value="UniProtKB-KW"/>
</dbReference>
<dbReference type="GO" id="GO:0000166">
    <property type="term" value="F:nucleotide binding"/>
    <property type="evidence" value="ECO:0007669"/>
    <property type="project" value="UniProtKB-KW"/>
</dbReference>
<dbReference type="GO" id="GO:0008652">
    <property type="term" value="P:amino acid biosynthetic process"/>
    <property type="evidence" value="ECO:0007669"/>
    <property type="project" value="UniProtKB-KW"/>
</dbReference>
<dbReference type="GO" id="GO:0009073">
    <property type="term" value="P:aromatic amino acid family biosynthetic process"/>
    <property type="evidence" value="ECO:0007669"/>
    <property type="project" value="UniProtKB-KW"/>
</dbReference>
<dbReference type="GO" id="GO:0009423">
    <property type="term" value="P:chorismate biosynthetic process"/>
    <property type="evidence" value="ECO:0007669"/>
    <property type="project" value="UniProtKB-UniRule"/>
</dbReference>
<dbReference type="CDD" id="cd08195">
    <property type="entry name" value="DHQS"/>
    <property type="match status" value="1"/>
</dbReference>
<dbReference type="FunFam" id="3.40.50.1970:FF:000001">
    <property type="entry name" value="3-dehydroquinate synthase"/>
    <property type="match status" value="1"/>
</dbReference>
<dbReference type="Gene3D" id="3.40.50.1970">
    <property type="match status" value="1"/>
</dbReference>
<dbReference type="Gene3D" id="1.20.1090.10">
    <property type="entry name" value="Dehydroquinate synthase-like - alpha domain"/>
    <property type="match status" value="1"/>
</dbReference>
<dbReference type="HAMAP" id="MF_00110">
    <property type="entry name" value="DHQ_synthase"/>
    <property type="match status" value="1"/>
</dbReference>
<dbReference type="InterPro" id="IPR050071">
    <property type="entry name" value="Dehydroquinate_synthase"/>
</dbReference>
<dbReference type="InterPro" id="IPR016037">
    <property type="entry name" value="DHQ_synth_AroB"/>
</dbReference>
<dbReference type="InterPro" id="IPR030963">
    <property type="entry name" value="DHQ_synth_fam"/>
</dbReference>
<dbReference type="InterPro" id="IPR030960">
    <property type="entry name" value="DHQS/DOIS_N"/>
</dbReference>
<dbReference type="InterPro" id="IPR056179">
    <property type="entry name" value="DHQS_C"/>
</dbReference>
<dbReference type="NCBIfam" id="TIGR01357">
    <property type="entry name" value="aroB"/>
    <property type="match status" value="1"/>
</dbReference>
<dbReference type="PANTHER" id="PTHR43622">
    <property type="entry name" value="3-DEHYDROQUINATE SYNTHASE"/>
    <property type="match status" value="1"/>
</dbReference>
<dbReference type="PANTHER" id="PTHR43622:SF7">
    <property type="entry name" value="3-DEHYDROQUINATE SYNTHASE, CHLOROPLASTIC"/>
    <property type="match status" value="1"/>
</dbReference>
<dbReference type="Pfam" id="PF01761">
    <property type="entry name" value="DHQ_synthase"/>
    <property type="match status" value="1"/>
</dbReference>
<dbReference type="Pfam" id="PF24621">
    <property type="entry name" value="DHQS_C"/>
    <property type="match status" value="1"/>
</dbReference>
<dbReference type="PIRSF" id="PIRSF001455">
    <property type="entry name" value="DHQ_synth"/>
    <property type="match status" value="1"/>
</dbReference>
<dbReference type="SUPFAM" id="SSF56796">
    <property type="entry name" value="Dehydroquinate synthase-like"/>
    <property type="match status" value="1"/>
</dbReference>
<evidence type="ECO:0000255" key="1">
    <source>
        <dbReference type="HAMAP-Rule" id="MF_00110"/>
    </source>
</evidence>